<keyword id="KW-0067">ATP-binding</keyword>
<keyword id="KW-0414">Isoprene biosynthesis</keyword>
<keyword id="KW-0418">Kinase</keyword>
<keyword id="KW-0547">Nucleotide-binding</keyword>
<keyword id="KW-1185">Reference proteome</keyword>
<keyword id="KW-0808">Transferase</keyword>
<proteinExistence type="inferred from homology"/>
<name>ISPE_NOCSJ</name>
<sequence length="297" mass="30448">MRAPAKVNLHLGVGAPREDGFHPLVTVYQAVGLYDDVTARAAPDWSVGVGLPDWMDDDAVPLNGANIVDRAADLLAAHHGVERTGELHIAKAIPVAGGMAGGSADAAAALVALDRLWGLDTSDDDLLALAARLGSDVPFALLGGTALGTGRGEVVTPVQDRGTWWWVVVPSDTGLSTPEVYRHFDRMFPDAPSQPVPADALLGAIAAGDTWALADALHNDLEAAAIDLRPELGRLIERGEEAGALRGLVSGSGPTCVFLCGSADHARSLAADLSGAGHPVVLAANGPVAGAHLVSYA</sequence>
<gene>
    <name evidence="1" type="primary">ispE</name>
    <name type="ordered locus">Noca_3855</name>
</gene>
<accession>A1SNG8</accession>
<dbReference type="EC" id="2.7.1.148" evidence="1"/>
<dbReference type="EMBL" id="CP000509">
    <property type="protein sequence ID" value="ABL83353.1"/>
    <property type="molecule type" value="Genomic_DNA"/>
</dbReference>
<dbReference type="SMR" id="A1SNG8"/>
<dbReference type="STRING" id="196162.Noca_3855"/>
<dbReference type="KEGG" id="nca:Noca_3855"/>
<dbReference type="eggNOG" id="COG1947">
    <property type="taxonomic scope" value="Bacteria"/>
</dbReference>
<dbReference type="HOGENOM" id="CLU_053057_1_1_11"/>
<dbReference type="OrthoDB" id="3173073at2"/>
<dbReference type="UniPathway" id="UPA00056">
    <property type="reaction ID" value="UER00094"/>
</dbReference>
<dbReference type="Proteomes" id="UP000000640">
    <property type="component" value="Chromosome"/>
</dbReference>
<dbReference type="GO" id="GO:0050515">
    <property type="term" value="F:4-(cytidine 5'-diphospho)-2-C-methyl-D-erythritol kinase activity"/>
    <property type="evidence" value="ECO:0007669"/>
    <property type="project" value="UniProtKB-UniRule"/>
</dbReference>
<dbReference type="GO" id="GO:0005524">
    <property type="term" value="F:ATP binding"/>
    <property type="evidence" value="ECO:0007669"/>
    <property type="project" value="UniProtKB-UniRule"/>
</dbReference>
<dbReference type="GO" id="GO:0019288">
    <property type="term" value="P:isopentenyl diphosphate biosynthetic process, methylerythritol 4-phosphate pathway"/>
    <property type="evidence" value="ECO:0007669"/>
    <property type="project" value="UniProtKB-UniRule"/>
</dbReference>
<dbReference type="GO" id="GO:0016114">
    <property type="term" value="P:terpenoid biosynthetic process"/>
    <property type="evidence" value="ECO:0007669"/>
    <property type="project" value="InterPro"/>
</dbReference>
<dbReference type="Gene3D" id="3.30.230.10">
    <property type="match status" value="1"/>
</dbReference>
<dbReference type="Gene3D" id="3.30.70.890">
    <property type="entry name" value="GHMP kinase, C-terminal domain"/>
    <property type="match status" value="1"/>
</dbReference>
<dbReference type="HAMAP" id="MF_00061">
    <property type="entry name" value="IspE"/>
    <property type="match status" value="1"/>
</dbReference>
<dbReference type="InterPro" id="IPR013750">
    <property type="entry name" value="GHMP_kinase_C_dom"/>
</dbReference>
<dbReference type="InterPro" id="IPR036554">
    <property type="entry name" value="GHMP_kinase_C_sf"/>
</dbReference>
<dbReference type="InterPro" id="IPR006204">
    <property type="entry name" value="GHMP_kinase_N_dom"/>
</dbReference>
<dbReference type="InterPro" id="IPR004424">
    <property type="entry name" value="IspE"/>
</dbReference>
<dbReference type="InterPro" id="IPR020568">
    <property type="entry name" value="Ribosomal_Su5_D2-typ_SF"/>
</dbReference>
<dbReference type="InterPro" id="IPR014721">
    <property type="entry name" value="Ribsml_uS5_D2-typ_fold_subgr"/>
</dbReference>
<dbReference type="NCBIfam" id="TIGR00154">
    <property type="entry name" value="ispE"/>
    <property type="match status" value="1"/>
</dbReference>
<dbReference type="NCBIfam" id="NF002870">
    <property type="entry name" value="PRK03188.1"/>
    <property type="match status" value="1"/>
</dbReference>
<dbReference type="PANTHER" id="PTHR43527">
    <property type="entry name" value="4-DIPHOSPHOCYTIDYL-2-C-METHYL-D-ERYTHRITOL KINASE, CHLOROPLASTIC"/>
    <property type="match status" value="1"/>
</dbReference>
<dbReference type="PANTHER" id="PTHR43527:SF2">
    <property type="entry name" value="4-DIPHOSPHOCYTIDYL-2-C-METHYL-D-ERYTHRITOL KINASE, CHLOROPLASTIC"/>
    <property type="match status" value="1"/>
</dbReference>
<dbReference type="Pfam" id="PF08544">
    <property type="entry name" value="GHMP_kinases_C"/>
    <property type="match status" value="1"/>
</dbReference>
<dbReference type="Pfam" id="PF00288">
    <property type="entry name" value="GHMP_kinases_N"/>
    <property type="match status" value="1"/>
</dbReference>
<dbReference type="PIRSF" id="PIRSF010376">
    <property type="entry name" value="IspE"/>
    <property type="match status" value="1"/>
</dbReference>
<dbReference type="SUPFAM" id="SSF55060">
    <property type="entry name" value="GHMP Kinase, C-terminal domain"/>
    <property type="match status" value="1"/>
</dbReference>
<dbReference type="SUPFAM" id="SSF54211">
    <property type="entry name" value="Ribosomal protein S5 domain 2-like"/>
    <property type="match status" value="1"/>
</dbReference>
<reference key="1">
    <citation type="submission" date="2006-12" db="EMBL/GenBank/DDBJ databases">
        <title>Complete sequence of chromosome 1 of Nocardioides sp. JS614.</title>
        <authorList>
            <person name="Copeland A."/>
            <person name="Lucas S."/>
            <person name="Lapidus A."/>
            <person name="Barry K."/>
            <person name="Detter J.C."/>
            <person name="Glavina del Rio T."/>
            <person name="Hammon N."/>
            <person name="Israni S."/>
            <person name="Dalin E."/>
            <person name="Tice H."/>
            <person name="Pitluck S."/>
            <person name="Thompson L.S."/>
            <person name="Brettin T."/>
            <person name="Bruce D."/>
            <person name="Han C."/>
            <person name="Tapia R."/>
            <person name="Schmutz J."/>
            <person name="Larimer F."/>
            <person name="Land M."/>
            <person name="Hauser L."/>
            <person name="Kyrpides N."/>
            <person name="Kim E."/>
            <person name="Mattes T."/>
            <person name="Gossett J."/>
            <person name="Richardson P."/>
        </authorList>
    </citation>
    <scope>NUCLEOTIDE SEQUENCE [LARGE SCALE GENOMIC DNA]</scope>
    <source>
        <strain>ATCC BAA-499 / JS614</strain>
    </source>
</reference>
<organism>
    <name type="scientific">Nocardioides sp. (strain ATCC BAA-499 / JS614)</name>
    <dbReference type="NCBI Taxonomy" id="196162"/>
    <lineage>
        <taxon>Bacteria</taxon>
        <taxon>Bacillati</taxon>
        <taxon>Actinomycetota</taxon>
        <taxon>Actinomycetes</taxon>
        <taxon>Propionibacteriales</taxon>
        <taxon>Nocardioidaceae</taxon>
        <taxon>Nocardioides</taxon>
    </lineage>
</organism>
<feature type="chain" id="PRO_0000335733" description="4-diphosphocytidyl-2-C-methyl-D-erythritol kinase">
    <location>
        <begin position="1"/>
        <end position="297"/>
    </location>
</feature>
<feature type="active site" evidence="1">
    <location>
        <position position="6"/>
    </location>
</feature>
<feature type="active site" evidence="1">
    <location>
        <position position="136"/>
    </location>
</feature>
<feature type="binding site" evidence="1">
    <location>
        <begin position="94"/>
        <end position="104"/>
    </location>
    <ligand>
        <name>ATP</name>
        <dbReference type="ChEBI" id="CHEBI:30616"/>
    </ligand>
</feature>
<evidence type="ECO:0000255" key="1">
    <source>
        <dbReference type="HAMAP-Rule" id="MF_00061"/>
    </source>
</evidence>
<protein>
    <recommendedName>
        <fullName evidence="1">4-diphosphocytidyl-2-C-methyl-D-erythritol kinase</fullName>
        <shortName evidence="1">CMK</shortName>
        <ecNumber evidence="1">2.7.1.148</ecNumber>
    </recommendedName>
    <alternativeName>
        <fullName evidence="1">4-(cytidine-5'-diphospho)-2-C-methyl-D-erythritol kinase</fullName>
    </alternativeName>
</protein>
<comment type="function">
    <text evidence="1">Catalyzes the phosphorylation of the position 2 hydroxy group of 4-diphosphocytidyl-2C-methyl-D-erythritol.</text>
</comment>
<comment type="catalytic activity">
    <reaction evidence="1">
        <text>4-CDP-2-C-methyl-D-erythritol + ATP = 4-CDP-2-C-methyl-D-erythritol 2-phosphate + ADP + H(+)</text>
        <dbReference type="Rhea" id="RHEA:18437"/>
        <dbReference type="ChEBI" id="CHEBI:15378"/>
        <dbReference type="ChEBI" id="CHEBI:30616"/>
        <dbReference type="ChEBI" id="CHEBI:57823"/>
        <dbReference type="ChEBI" id="CHEBI:57919"/>
        <dbReference type="ChEBI" id="CHEBI:456216"/>
        <dbReference type="EC" id="2.7.1.148"/>
    </reaction>
</comment>
<comment type="pathway">
    <text evidence="1">Isoprenoid biosynthesis; isopentenyl diphosphate biosynthesis via DXP pathway; isopentenyl diphosphate from 1-deoxy-D-xylulose 5-phosphate: step 3/6.</text>
</comment>
<comment type="similarity">
    <text evidence="1">Belongs to the GHMP kinase family. IspE subfamily.</text>
</comment>